<protein>
    <recommendedName>
        <fullName evidence="1">Probable GTP-binding protein EngB</fullName>
    </recommendedName>
</protein>
<accession>B2IR86</accession>
<name>ENGB_STRPS</name>
<reference key="1">
    <citation type="journal article" date="2009" name="BMC Genomics">
        <title>Genome evolution driven by host adaptations results in a more virulent and antimicrobial-resistant Streptococcus pneumoniae serotype 14.</title>
        <authorList>
            <person name="Ding F."/>
            <person name="Tang P."/>
            <person name="Hsu M.-H."/>
            <person name="Cui P."/>
            <person name="Hu S."/>
            <person name="Yu J."/>
            <person name="Chiu C.-H."/>
        </authorList>
    </citation>
    <scope>NUCLEOTIDE SEQUENCE [LARGE SCALE GENOMIC DNA]</scope>
    <source>
        <strain>CGSP14</strain>
    </source>
</reference>
<comment type="function">
    <text evidence="1">Necessary for normal cell division and for the maintenance of normal septation.</text>
</comment>
<comment type="cofactor">
    <cofactor evidence="1">
        <name>Mg(2+)</name>
        <dbReference type="ChEBI" id="CHEBI:18420"/>
    </cofactor>
</comment>
<comment type="similarity">
    <text evidence="1">Belongs to the TRAFAC class TrmE-Era-EngA-EngB-Septin-like GTPase superfamily. EngB GTPase family.</text>
</comment>
<evidence type="ECO:0000255" key="1">
    <source>
        <dbReference type="HAMAP-Rule" id="MF_00321"/>
    </source>
</evidence>
<organism>
    <name type="scientific">Streptococcus pneumoniae (strain CGSP14)</name>
    <dbReference type="NCBI Taxonomy" id="516950"/>
    <lineage>
        <taxon>Bacteria</taxon>
        <taxon>Bacillati</taxon>
        <taxon>Bacillota</taxon>
        <taxon>Bacilli</taxon>
        <taxon>Lactobacillales</taxon>
        <taxon>Streptococcaceae</taxon>
        <taxon>Streptococcus</taxon>
    </lineage>
</organism>
<feature type="chain" id="PRO_1000119597" description="Probable GTP-binding protein EngB">
    <location>
        <begin position="1"/>
        <end position="197"/>
    </location>
</feature>
<feature type="domain" description="EngB-type G" evidence="1">
    <location>
        <begin position="26"/>
        <end position="197"/>
    </location>
</feature>
<feature type="binding site" evidence="1">
    <location>
        <begin position="34"/>
        <end position="41"/>
    </location>
    <ligand>
        <name>GTP</name>
        <dbReference type="ChEBI" id="CHEBI:37565"/>
    </ligand>
</feature>
<feature type="binding site" evidence="1">
    <location>
        <position position="41"/>
    </location>
    <ligand>
        <name>Mg(2+)</name>
        <dbReference type="ChEBI" id="CHEBI:18420"/>
    </ligand>
</feature>
<feature type="binding site" evidence="1">
    <location>
        <begin position="61"/>
        <end position="65"/>
    </location>
    <ligand>
        <name>GTP</name>
        <dbReference type="ChEBI" id="CHEBI:37565"/>
    </ligand>
</feature>
<feature type="binding site" evidence="1">
    <location>
        <position position="63"/>
    </location>
    <ligand>
        <name>Mg(2+)</name>
        <dbReference type="ChEBI" id="CHEBI:18420"/>
    </ligand>
</feature>
<feature type="binding site" evidence="1">
    <location>
        <begin position="79"/>
        <end position="82"/>
    </location>
    <ligand>
        <name>GTP</name>
        <dbReference type="ChEBI" id="CHEBI:37565"/>
    </ligand>
</feature>
<feature type="binding site" evidence="1">
    <location>
        <begin position="146"/>
        <end position="149"/>
    </location>
    <ligand>
        <name>GTP</name>
        <dbReference type="ChEBI" id="CHEBI:37565"/>
    </ligand>
</feature>
<feature type="binding site" evidence="1">
    <location>
        <begin position="178"/>
        <end position="180"/>
    </location>
    <ligand>
        <name>GTP</name>
        <dbReference type="ChEBI" id="CHEBI:37565"/>
    </ligand>
</feature>
<keyword id="KW-0131">Cell cycle</keyword>
<keyword id="KW-0132">Cell division</keyword>
<keyword id="KW-0342">GTP-binding</keyword>
<keyword id="KW-0460">Magnesium</keyword>
<keyword id="KW-0479">Metal-binding</keyword>
<keyword id="KW-0547">Nucleotide-binding</keyword>
<keyword id="KW-0717">Septation</keyword>
<dbReference type="EMBL" id="CP001033">
    <property type="protein sequence ID" value="ACB90805.1"/>
    <property type="molecule type" value="Genomic_DNA"/>
</dbReference>
<dbReference type="SMR" id="B2IR86"/>
<dbReference type="KEGG" id="spw:SPCG_1553"/>
<dbReference type="HOGENOM" id="CLU_033732_3_0_9"/>
<dbReference type="GO" id="GO:0005829">
    <property type="term" value="C:cytosol"/>
    <property type="evidence" value="ECO:0007669"/>
    <property type="project" value="TreeGrafter"/>
</dbReference>
<dbReference type="GO" id="GO:0005525">
    <property type="term" value="F:GTP binding"/>
    <property type="evidence" value="ECO:0007669"/>
    <property type="project" value="UniProtKB-UniRule"/>
</dbReference>
<dbReference type="GO" id="GO:0046872">
    <property type="term" value="F:metal ion binding"/>
    <property type="evidence" value="ECO:0007669"/>
    <property type="project" value="UniProtKB-KW"/>
</dbReference>
<dbReference type="GO" id="GO:0000917">
    <property type="term" value="P:division septum assembly"/>
    <property type="evidence" value="ECO:0007669"/>
    <property type="project" value="UniProtKB-KW"/>
</dbReference>
<dbReference type="CDD" id="cd01876">
    <property type="entry name" value="YihA_EngB"/>
    <property type="match status" value="1"/>
</dbReference>
<dbReference type="FunFam" id="3.40.50.300:FF:000098">
    <property type="entry name" value="Probable GTP-binding protein EngB"/>
    <property type="match status" value="1"/>
</dbReference>
<dbReference type="Gene3D" id="3.40.50.300">
    <property type="entry name" value="P-loop containing nucleotide triphosphate hydrolases"/>
    <property type="match status" value="1"/>
</dbReference>
<dbReference type="HAMAP" id="MF_00321">
    <property type="entry name" value="GTPase_EngB"/>
    <property type="match status" value="1"/>
</dbReference>
<dbReference type="InterPro" id="IPR030393">
    <property type="entry name" value="G_ENGB_dom"/>
</dbReference>
<dbReference type="InterPro" id="IPR006073">
    <property type="entry name" value="GTP-bd"/>
</dbReference>
<dbReference type="InterPro" id="IPR019987">
    <property type="entry name" value="GTP-bd_ribosome_bio_YsxC"/>
</dbReference>
<dbReference type="InterPro" id="IPR027417">
    <property type="entry name" value="P-loop_NTPase"/>
</dbReference>
<dbReference type="NCBIfam" id="TIGR03598">
    <property type="entry name" value="GTPase_YsxC"/>
    <property type="match status" value="1"/>
</dbReference>
<dbReference type="PANTHER" id="PTHR11649:SF13">
    <property type="entry name" value="ENGB-TYPE G DOMAIN-CONTAINING PROTEIN"/>
    <property type="match status" value="1"/>
</dbReference>
<dbReference type="PANTHER" id="PTHR11649">
    <property type="entry name" value="MSS1/TRME-RELATED GTP-BINDING PROTEIN"/>
    <property type="match status" value="1"/>
</dbReference>
<dbReference type="Pfam" id="PF01926">
    <property type="entry name" value="MMR_HSR1"/>
    <property type="match status" value="1"/>
</dbReference>
<dbReference type="PRINTS" id="PR00449">
    <property type="entry name" value="RASTRNSFRMNG"/>
</dbReference>
<dbReference type="SUPFAM" id="SSF52540">
    <property type="entry name" value="P-loop containing nucleoside triphosphate hydrolases"/>
    <property type="match status" value="1"/>
</dbReference>
<dbReference type="PROSITE" id="PS51706">
    <property type="entry name" value="G_ENGB"/>
    <property type="match status" value="1"/>
</dbReference>
<proteinExistence type="inferred from homology"/>
<sequence length="197" mass="22559">MTMELNTHNAEILLSAANKSHYPQDELPEIALAGRSNVGKSSFINTMLNRKNLARTSGKPGKTQLLNFFNIDDKMRFVDVPGYGYARVSKKEREKWGRMIEEYLTTRENLRAVVSLVDLRHDPSADDVQMYEFLKYYEIPVIIVATKADKIPRGKWNKHESAIKKKLNFDPSDDFILFSSVSKAGMDEAWDAILEKL</sequence>
<gene>
    <name evidence="1" type="primary">engB</name>
    <name type="ordered locus">SPCG_1553</name>
</gene>